<protein>
    <recommendedName>
        <fullName>Glycerol-3-phosphate dehydrogenase</fullName>
        <ecNumber>1.1.5.3</ecNumber>
    </recommendedName>
</protein>
<organism>
    <name type="scientific">Pseudomonas aeruginosa (strain ATCC 15692 / DSM 22644 / CIP 104116 / JCM 14847 / LMG 12228 / 1C / PRS 101 / PAO1)</name>
    <dbReference type="NCBI Taxonomy" id="208964"/>
    <lineage>
        <taxon>Bacteria</taxon>
        <taxon>Pseudomonadati</taxon>
        <taxon>Pseudomonadota</taxon>
        <taxon>Gammaproteobacteria</taxon>
        <taxon>Pseudomonadales</taxon>
        <taxon>Pseudomonadaceae</taxon>
        <taxon>Pseudomonas</taxon>
    </lineage>
</organism>
<sequence length="512" mass="57135">MSQAHTPSAPLAEVYDVAVVGGGINGVGIAADAAGRGLSVFLCEQHDLAQHTSSASSKLIHGGLRYLEHYEFRLVREALAEREVLLAKAPHIVKPLRFVLPHRPHLRPAWMIRAGLFLYDHLGKREKLPASRGLRFTGSSPLKAEIRRGFEYSDCAVDDARLVVLNAISAREHGAHVHTRTRCVSARRSKGLWHLHLERSDGSLYSIRARALVNAAGPWVARFIQDDLKQKSPYGIRLIQGSHIIVPKLYEGEHAYILQNEDRRIVFAIPYLDRFTMIGTTDREYQGDPAKVAISEEETAYLLQVVNAHFKQQLAAADILHSFAGVRPLCDDESDEPSAITRDYTLSLSAGNGEPPLLSVFGGKLTTYRKLAESALTQLQPFFANLGPAWTAKAPLPGGEQMQSVEALTEQLANRYAWLDRELALRWARTYGTRVWRLLDGVNGEADLGEHLGGGLYAREVDYLCKHEWAQDAEDILWRRSKLGLFLSPSQQVRLGQYLQSEHPHRPRVHAA</sequence>
<feature type="chain" id="PRO_0000126104" description="Glycerol-3-phosphate dehydrogenase">
    <location>
        <begin position="1"/>
        <end position="512"/>
    </location>
</feature>
<feature type="binding site" evidence="1">
    <location>
        <begin position="16"/>
        <end position="44"/>
    </location>
    <ligand>
        <name>FAD</name>
        <dbReference type="ChEBI" id="CHEBI:57692"/>
    </ligand>
</feature>
<feature type="sequence conflict" description="In Ref. 1; AAA81584." evidence="2" ref="1">
    <original>EA</original>
    <variation>DT</variation>
    <location>
        <begin position="77"/>
        <end position="78"/>
    </location>
</feature>
<feature type="sequence conflict" description="In Ref. 1; AAA81584." evidence="2" ref="1">
    <original>GLRFTGSS</original>
    <variation>ACVHRQQ</variation>
    <location>
        <begin position="133"/>
        <end position="140"/>
    </location>
</feature>
<feature type="sequence conflict" description="In Ref. 1; AAA81584." evidence="2" ref="1">
    <original>RTRCVSARRSKGLWHLHLERSDGSLYSIR</original>
    <variation>APAASAPVAARDSGTCTWSAATAACIRS</variation>
    <location>
        <begin position="180"/>
        <end position="208"/>
    </location>
</feature>
<feature type="sequence conflict" description="In Ref. 1; AAA81584." evidence="2" ref="1">
    <original>LRWART</original>
    <variation>PALGAH</variation>
    <location>
        <begin position="425"/>
        <end position="430"/>
    </location>
</feature>
<evidence type="ECO:0000255" key="1"/>
<evidence type="ECO:0000305" key="2"/>
<accession>P52111</accession>
<reference key="1">
    <citation type="journal article" date="1994" name="J. Bacteriol.">
        <title>Cloning and nucleotide sequence of the glpD gene encoding sn-glycerol-3-phosphate dehydrogenase of Pseudomonas aeruginosa.</title>
        <authorList>
            <person name="Schweizer H.P."/>
            <person name="Po C."/>
        </authorList>
    </citation>
    <scope>NUCLEOTIDE SEQUENCE [GENOMIC DNA]</scope>
    <source>
        <strain>CD10</strain>
    </source>
</reference>
<reference key="2">
    <citation type="journal article" date="2000" name="Nature">
        <title>Complete genome sequence of Pseudomonas aeruginosa PAO1, an opportunistic pathogen.</title>
        <authorList>
            <person name="Stover C.K."/>
            <person name="Pham X.-Q.T."/>
            <person name="Erwin A.L."/>
            <person name="Mizoguchi S.D."/>
            <person name="Warrener P."/>
            <person name="Hickey M.J."/>
            <person name="Brinkman F.S.L."/>
            <person name="Hufnagle W.O."/>
            <person name="Kowalik D.J."/>
            <person name="Lagrou M."/>
            <person name="Garber R.L."/>
            <person name="Goltry L."/>
            <person name="Tolentino E."/>
            <person name="Westbrock-Wadman S."/>
            <person name="Yuan Y."/>
            <person name="Brody L.L."/>
            <person name="Coulter S.N."/>
            <person name="Folger K.R."/>
            <person name="Kas A."/>
            <person name="Larbig K."/>
            <person name="Lim R.M."/>
            <person name="Smith K.A."/>
            <person name="Spencer D.H."/>
            <person name="Wong G.K.-S."/>
            <person name="Wu Z."/>
            <person name="Paulsen I.T."/>
            <person name="Reizer J."/>
            <person name="Saier M.H. Jr."/>
            <person name="Hancock R.E.W."/>
            <person name="Lory S."/>
            <person name="Olson M.V."/>
        </authorList>
    </citation>
    <scope>NUCLEOTIDE SEQUENCE [LARGE SCALE GENOMIC DNA]</scope>
    <source>
        <strain>ATCC 15692 / DSM 22644 / CIP 104116 / JCM 14847 / LMG 12228 / 1C / PRS 101 / PAO1</strain>
    </source>
</reference>
<name>GLPD_PSEAE</name>
<comment type="catalytic activity">
    <reaction>
        <text>a quinone + sn-glycerol 3-phosphate = dihydroxyacetone phosphate + a quinol</text>
        <dbReference type="Rhea" id="RHEA:18977"/>
        <dbReference type="ChEBI" id="CHEBI:24646"/>
        <dbReference type="ChEBI" id="CHEBI:57597"/>
        <dbReference type="ChEBI" id="CHEBI:57642"/>
        <dbReference type="ChEBI" id="CHEBI:132124"/>
        <dbReference type="EC" id="1.1.5.3"/>
    </reaction>
</comment>
<comment type="cofactor">
    <cofactor>
        <name>FAD</name>
        <dbReference type="ChEBI" id="CHEBI:57692"/>
    </cofactor>
</comment>
<comment type="subcellular location">
    <subcellularLocation>
        <location>Cytoplasm</location>
    </subcellularLocation>
</comment>
<comment type="similarity">
    <text evidence="2">Belongs to the FAD-dependent glycerol-3-phosphate dehydrogenase family.</text>
</comment>
<dbReference type="EC" id="1.1.5.3"/>
<dbReference type="EMBL" id="L06231">
    <property type="protein sequence ID" value="AAA81584.1"/>
    <property type="molecule type" value="Genomic_DNA"/>
</dbReference>
<dbReference type="EMBL" id="AE004091">
    <property type="protein sequence ID" value="AAG06972.1"/>
    <property type="molecule type" value="Genomic_DNA"/>
</dbReference>
<dbReference type="PIR" id="A55207">
    <property type="entry name" value="A55207"/>
</dbReference>
<dbReference type="PIR" id="B83197">
    <property type="entry name" value="B83197"/>
</dbReference>
<dbReference type="RefSeq" id="NP_252274.1">
    <property type="nucleotide sequence ID" value="NC_002516.2"/>
</dbReference>
<dbReference type="RefSeq" id="WP_003098460.1">
    <property type="nucleotide sequence ID" value="NZ_QZGE01000001.1"/>
</dbReference>
<dbReference type="SMR" id="P52111"/>
<dbReference type="FunCoup" id="P52111">
    <property type="interactions" value="548"/>
</dbReference>
<dbReference type="STRING" id="208964.PA3584"/>
<dbReference type="PaxDb" id="208964-PA3584"/>
<dbReference type="GeneID" id="880179"/>
<dbReference type="KEGG" id="pae:PA3584"/>
<dbReference type="PATRIC" id="fig|208964.12.peg.3751"/>
<dbReference type="PseudoCAP" id="PA3584"/>
<dbReference type="HOGENOM" id="CLU_015740_5_0_6"/>
<dbReference type="InParanoid" id="P52111"/>
<dbReference type="OrthoDB" id="9766796at2"/>
<dbReference type="PhylomeDB" id="P52111"/>
<dbReference type="BioCyc" id="PAER208964:G1FZ6-3653-MONOMER"/>
<dbReference type="Proteomes" id="UP000002438">
    <property type="component" value="Chromosome"/>
</dbReference>
<dbReference type="GO" id="GO:0005737">
    <property type="term" value="C:cytoplasm"/>
    <property type="evidence" value="ECO:0007669"/>
    <property type="project" value="UniProtKB-SubCell"/>
</dbReference>
<dbReference type="GO" id="GO:0004368">
    <property type="term" value="F:glycerol-3-phosphate dehydrogenase (quinone) activity"/>
    <property type="evidence" value="ECO:0000318"/>
    <property type="project" value="GO_Central"/>
</dbReference>
<dbReference type="GO" id="GO:0006071">
    <property type="term" value="P:glycerol metabolic process"/>
    <property type="evidence" value="ECO:0007669"/>
    <property type="project" value="UniProtKB-KW"/>
</dbReference>
<dbReference type="GO" id="GO:0046168">
    <property type="term" value="P:glycerol-3-phosphate catabolic process"/>
    <property type="evidence" value="ECO:0000318"/>
    <property type="project" value="GO_Central"/>
</dbReference>
<dbReference type="FunFam" id="1.10.8.870:FF:000002">
    <property type="entry name" value="Glycerol-3-phosphate dehydrogenase"/>
    <property type="match status" value="1"/>
</dbReference>
<dbReference type="Gene3D" id="6.10.250.1890">
    <property type="match status" value="1"/>
</dbReference>
<dbReference type="Gene3D" id="1.10.8.870">
    <property type="entry name" value="Alpha-glycerophosphate oxidase, cap domain"/>
    <property type="match status" value="1"/>
</dbReference>
<dbReference type="Gene3D" id="3.30.9.10">
    <property type="entry name" value="D-Amino Acid Oxidase, subunit A, domain 2"/>
    <property type="match status" value="1"/>
</dbReference>
<dbReference type="Gene3D" id="3.50.50.60">
    <property type="entry name" value="FAD/NAD(P)-binding domain"/>
    <property type="match status" value="1"/>
</dbReference>
<dbReference type="InterPro" id="IPR031656">
    <property type="entry name" value="DAO_C"/>
</dbReference>
<dbReference type="InterPro" id="IPR038299">
    <property type="entry name" value="DAO_C_sf"/>
</dbReference>
<dbReference type="InterPro" id="IPR006076">
    <property type="entry name" value="FAD-dep_OxRdtase"/>
</dbReference>
<dbReference type="InterPro" id="IPR036188">
    <property type="entry name" value="FAD/NAD-bd_sf"/>
</dbReference>
<dbReference type="InterPro" id="IPR000447">
    <property type="entry name" value="G3P_DH_FAD-dep"/>
</dbReference>
<dbReference type="NCBIfam" id="NF008899">
    <property type="entry name" value="PRK12266.1"/>
    <property type="match status" value="1"/>
</dbReference>
<dbReference type="NCBIfam" id="NF009906">
    <property type="entry name" value="PRK13369.1"/>
    <property type="match status" value="1"/>
</dbReference>
<dbReference type="PANTHER" id="PTHR11985">
    <property type="entry name" value="GLYCEROL-3-PHOSPHATE DEHYDROGENASE"/>
    <property type="match status" value="1"/>
</dbReference>
<dbReference type="PANTHER" id="PTHR11985:SF15">
    <property type="entry name" value="GLYCEROL-3-PHOSPHATE DEHYDROGENASE, MITOCHONDRIAL"/>
    <property type="match status" value="1"/>
</dbReference>
<dbReference type="Pfam" id="PF01266">
    <property type="entry name" value="DAO"/>
    <property type="match status" value="1"/>
</dbReference>
<dbReference type="Pfam" id="PF16901">
    <property type="entry name" value="DAO_C"/>
    <property type="match status" value="1"/>
</dbReference>
<dbReference type="PRINTS" id="PR01001">
    <property type="entry name" value="FADG3PDH"/>
</dbReference>
<dbReference type="SUPFAM" id="SSF51905">
    <property type="entry name" value="FAD/NAD(P)-binding domain"/>
    <property type="match status" value="1"/>
</dbReference>
<dbReference type="PROSITE" id="PS00977">
    <property type="entry name" value="FAD_G3PDH_1"/>
    <property type="match status" value="1"/>
</dbReference>
<dbReference type="PROSITE" id="PS00978">
    <property type="entry name" value="FAD_G3PDH_2"/>
    <property type="match status" value="1"/>
</dbReference>
<proteinExistence type="inferred from homology"/>
<gene>
    <name type="primary">glpD</name>
    <name type="ordered locus">PA3584</name>
</gene>
<keyword id="KW-0963">Cytoplasm</keyword>
<keyword id="KW-0274">FAD</keyword>
<keyword id="KW-0285">Flavoprotein</keyword>
<keyword id="KW-0319">Glycerol metabolism</keyword>
<keyword id="KW-0560">Oxidoreductase</keyword>
<keyword id="KW-1185">Reference proteome</keyword>